<protein>
    <recommendedName>
        <fullName evidence="2">Testis-expressed protein 52</fullName>
    </recommendedName>
</protein>
<organism>
    <name type="scientific">Mus musculus</name>
    <name type="common">Mouse</name>
    <dbReference type="NCBI Taxonomy" id="10090"/>
    <lineage>
        <taxon>Eukaryota</taxon>
        <taxon>Metazoa</taxon>
        <taxon>Chordata</taxon>
        <taxon>Craniata</taxon>
        <taxon>Vertebrata</taxon>
        <taxon>Euteleostomi</taxon>
        <taxon>Mammalia</taxon>
        <taxon>Eutheria</taxon>
        <taxon>Euarchontoglires</taxon>
        <taxon>Glires</taxon>
        <taxon>Rodentia</taxon>
        <taxon>Myomorpha</taxon>
        <taxon>Muroidea</taxon>
        <taxon>Muridae</taxon>
        <taxon>Murinae</taxon>
        <taxon>Mus</taxon>
        <taxon>Mus</taxon>
    </lineage>
</organism>
<proteinExistence type="evidence at transcript level"/>
<accession>Q3TTI8</accession>
<accession>Q9D448</accession>
<dbReference type="EMBL" id="AK016804">
    <property type="protein sequence ID" value="BAB30439.1"/>
    <property type="molecule type" value="mRNA"/>
</dbReference>
<dbReference type="EMBL" id="AK161342">
    <property type="protein sequence ID" value="BAE36337.1"/>
    <property type="molecule type" value="mRNA"/>
</dbReference>
<dbReference type="CCDS" id="CCDS51916.1">
    <molecule id="Q3TTI8-1"/>
</dbReference>
<dbReference type="RefSeq" id="NP_081973.1">
    <molecule id="Q3TTI8-1"/>
    <property type="nucleotide sequence ID" value="NM_027697.1"/>
</dbReference>
<dbReference type="SMR" id="Q3TTI8"/>
<dbReference type="FunCoup" id="Q3TTI8">
    <property type="interactions" value="75"/>
</dbReference>
<dbReference type="IntAct" id="Q3TTI8">
    <property type="interactions" value="1"/>
</dbReference>
<dbReference type="STRING" id="10090.ENSMUSP00000098486"/>
<dbReference type="iPTMnet" id="Q3TTI8"/>
<dbReference type="PhosphoSitePlus" id="Q3TTI8"/>
<dbReference type="PaxDb" id="10090-ENSMUSP00000098486"/>
<dbReference type="ProteomicsDB" id="262976">
    <molecule id="Q3TTI8-1"/>
</dbReference>
<dbReference type="ProteomicsDB" id="262977">
    <molecule id="Q3TTI8-2"/>
</dbReference>
<dbReference type="Ensembl" id="ENSMUST00000100926.4">
    <molecule id="Q3TTI8-1"/>
    <property type="protein sequence ID" value="ENSMUSP00000098486.3"/>
    <property type="gene ID" value="ENSMUSG00000079304.6"/>
</dbReference>
<dbReference type="Ensembl" id="ENSMUST00000130785.4">
    <molecule id="Q3TTI8-2"/>
    <property type="protein sequence ID" value="ENSMUSP00000145112.2"/>
    <property type="gene ID" value="ENSMUSG00000079304.6"/>
</dbReference>
<dbReference type="GeneID" id="71149"/>
<dbReference type="KEGG" id="mmu:71149"/>
<dbReference type="UCSC" id="uc009edm.2">
    <molecule id="Q3TTI8-1"/>
    <property type="organism name" value="mouse"/>
</dbReference>
<dbReference type="AGR" id="MGI:1918399"/>
<dbReference type="CTD" id="101929469"/>
<dbReference type="MGI" id="MGI:1918399">
    <property type="gene designation" value="Tex52"/>
</dbReference>
<dbReference type="VEuPathDB" id="HostDB:ENSMUSG00000079304"/>
<dbReference type="eggNOG" id="ENOG502S25Y">
    <property type="taxonomic scope" value="Eukaryota"/>
</dbReference>
<dbReference type="GeneTree" id="ENSGT00390000006066"/>
<dbReference type="HOGENOM" id="CLU_087011_0_0_1"/>
<dbReference type="InParanoid" id="Q3TTI8"/>
<dbReference type="OMA" id="QHTWGFH"/>
<dbReference type="OrthoDB" id="10017413at2759"/>
<dbReference type="TreeFam" id="TF329678"/>
<dbReference type="BioGRID-ORCS" id="71149">
    <property type="hits" value="1 hit in 76 CRISPR screens"/>
</dbReference>
<dbReference type="ChiTaRS" id="Tex52">
    <property type="organism name" value="mouse"/>
</dbReference>
<dbReference type="PRO" id="PR:Q3TTI8"/>
<dbReference type="Proteomes" id="UP000000589">
    <property type="component" value="Chromosome 6"/>
</dbReference>
<dbReference type="RNAct" id="Q3TTI8">
    <property type="molecule type" value="protein"/>
</dbReference>
<dbReference type="Bgee" id="ENSMUSG00000079304">
    <property type="expression patterns" value="Expressed in seminiferous tubule of testis and 32 other cell types or tissues"/>
</dbReference>
<dbReference type="InterPro" id="IPR029206">
    <property type="entry name" value="DUF4532"/>
</dbReference>
<dbReference type="PANTHER" id="PTHR35156">
    <property type="entry name" value="TESTIS-EXPRESSED PROTEIN 52"/>
    <property type="match status" value="1"/>
</dbReference>
<dbReference type="PANTHER" id="PTHR35156:SF1">
    <property type="entry name" value="TESTIS-EXPRESSED PROTEIN 52"/>
    <property type="match status" value="1"/>
</dbReference>
<dbReference type="Pfam" id="PF15046">
    <property type="entry name" value="DUF4532"/>
    <property type="match status" value="1"/>
</dbReference>
<name>TEX52_MOUSE</name>
<keyword id="KW-0025">Alternative splicing</keyword>
<keyword id="KW-1185">Reference proteome</keyword>
<evidence type="ECO:0000303" key="1">
    <source>
    </source>
</evidence>
<evidence type="ECO:0000305" key="2"/>
<evidence type="ECO:0000312" key="3">
    <source>
        <dbReference type="MGI" id="MGI:1918399"/>
    </source>
</evidence>
<feature type="chain" id="PRO_0000346160" description="Testis-expressed protein 52">
    <location>
        <begin position="1"/>
        <end position="308"/>
    </location>
</feature>
<feature type="splice variant" id="VSP_034982" description="In isoform 2." evidence="1">
    <original>YQYISTGGRLVPWGLQFLP</original>
    <variation>HTVSCLPCKRLEAATRVIC</variation>
    <location>
        <begin position="212"/>
        <end position="230"/>
    </location>
</feature>
<feature type="splice variant" id="VSP_034983" description="In isoform 2." evidence="1">
    <location>
        <begin position="231"/>
        <end position="308"/>
    </location>
</feature>
<feature type="sequence conflict" description="In Ref. 1; BAB30439." evidence="2" ref="1">
    <original>A</original>
    <variation>T</variation>
    <location>
        <position position="109"/>
    </location>
</feature>
<sequence length="308" mass="35370">MANIPKKTSLQKSSLSQVSRTREPFLKMIHAKESSPIYQTWTQREFLLPKETKEFPGFTLQDYHKLALKQPPCTELKSKVRHQVLYPSKDAAEHTWGFHTWLDVGRLPATFPTRPDVPYDSNVWRHLTHANAHRLPAAQPGIPPPSWMGPHSFLSFISASPIVVDLKRRKQIIVRTVKELKEVEKLKLRSELRAPPLDANGNILPPPNFKKYQYISTGGRLVPWGLQFLPNPIPNNICKSWPCPNHQPHYQEKVLKLARLPTVPLSKDLVKDYQALIKDRLALPVHYLSKARPAKTPEGKRKRRPGYV</sequence>
<comment type="alternative products">
    <event type="alternative splicing"/>
    <isoform>
        <id>Q3TTI8-1</id>
        <name>1</name>
        <sequence type="displayed"/>
    </isoform>
    <isoform>
        <id>Q3TTI8-2</id>
        <name>2</name>
        <sequence type="described" ref="VSP_034982 VSP_034983"/>
    </isoform>
</comment>
<comment type="tissue specificity">
    <text evidence="2">Expressed in Testis.</text>
</comment>
<gene>
    <name evidence="3" type="primary">Tex52</name>
</gene>
<reference key="1">
    <citation type="journal article" date="2005" name="Science">
        <title>The transcriptional landscape of the mammalian genome.</title>
        <authorList>
            <person name="Carninci P."/>
            <person name="Kasukawa T."/>
            <person name="Katayama S."/>
            <person name="Gough J."/>
            <person name="Frith M.C."/>
            <person name="Maeda N."/>
            <person name="Oyama R."/>
            <person name="Ravasi T."/>
            <person name="Lenhard B."/>
            <person name="Wells C."/>
            <person name="Kodzius R."/>
            <person name="Shimokawa K."/>
            <person name="Bajic V.B."/>
            <person name="Brenner S.E."/>
            <person name="Batalov S."/>
            <person name="Forrest A.R."/>
            <person name="Zavolan M."/>
            <person name="Davis M.J."/>
            <person name="Wilming L.G."/>
            <person name="Aidinis V."/>
            <person name="Allen J.E."/>
            <person name="Ambesi-Impiombato A."/>
            <person name="Apweiler R."/>
            <person name="Aturaliya R.N."/>
            <person name="Bailey T.L."/>
            <person name="Bansal M."/>
            <person name="Baxter L."/>
            <person name="Beisel K.W."/>
            <person name="Bersano T."/>
            <person name="Bono H."/>
            <person name="Chalk A.M."/>
            <person name="Chiu K.P."/>
            <person name="Choudhary V."/>
            <person name="Christoffels A."/>
            <person name="Clutterbuck D.R."/>
            <person name="Crowe M.L."/>
            <person name="Dalla E."/>
            <person name="Dalrymple B.P."/>
            <person name="de Bono B."/>
            <person name="Della Gatta G."/>
            <person name="di Bernardo D."/>
            <person name="Down T."/>
            <person name="Engstrom P."/>
            <person name="Fagiolini M."/>
            <person name="Faulkner G."/>
            <person name="Fletcher C.F."/>
            <person name="Fukushima T."/>
            <person name="Furuno M."/>
            <person name="Futaki S."/>
            <person name="Gariboldi M."/>
            <person name="Georgii-Hemming P."/>
            <person name="Gingeras T.R."/>
            <person name="Gojobori T."/>
            <person name="Green R.E."/>
            <person name="Gustincich S."/>
            <person name="Harbers M."/>
            <person name="Hayashi Y."/>
            <person name="Hensch T.K."/>
            <person name="Hirokawa N."/>
            <person name="Hill D."/>
            <person name="Huminiecki L."/>
            <person name="Iacono M."/>
            <person name="Ikeo K."/>
            <person name="Iwama A."/>
            <person name="Ishikawa T."/>
            <person name="Jakt M."/>
            <person name="Kanapin A."/>
            <person name="Katoh M."/>
            <person name="Kawasawa Y."/>
            <person name="Kelso J."/>
            <person name="Kitamura H."/>
            <person name="Kitano H."/>
            <person name="Kollias G."/>
            <person name="Krishnan S.P."/>
            <person name="Kruger A."/>
            <person name="Kummerfeld S.K."/>
            <person name="Kurochkin I.V."/>
            <person name="Lareau L.F."/>
            <person name="Lazarevic D."/>
            <person name="Lipovich L."/>
            <person name="Liu J."/>
            <person name="Liuni S."/>
            <person name="McWilliam S."/>
            <person name="Madan Babu M."/>
            <person name="Madera M."/>
            <person name="Marchionni L."/>
            <person name="Matsuda H."/>
            <person name="Matsuzawa S."/>
            <person name="Miki H."/>
            <person name="Mignone F."/>
            <person name="Miyake S."/>
            <person name="Morris K."/>
            <person name="Mottagui-Tabar S."/>
            <person name="Mulder N."/>
            <person name="Nakano N."/>
            <person name="Nakauchi H."/>
            <person name="Ng P."/>
            <person name="Nilsson R."/>
            <person name="Nishiguchi S."/>
            <person name="Nishikawa S."/>
            <person name="Nori F."/>
            <person name="Ohara O."/>
            <person name="Okazaki Y."/>
            <person name="Orlando V."/>
            <person name="Pang K.C."/>
            <person name="Pavan W.J."/>
            <person name="Pavesi G."/>
            <person name="Pesole G."/>
            <person name="Petrovsky N."/>
            <person name="Piazza S."/>
            <person name="Reed J."/>
            <person name="Reid J.F."/>
            <person name="Ring B.Z."/>
            <person name="Ringwald M."/>
            <person name="Rost B."/>
            <person name="Ruan Y."/>
            <person name="Salzberg S.L."/>
            <person name="Sandelin A."/>
            <person name="Schneider C."/>
            <person name="Schoenbach C."/>
            <person name="Sekiguchi K."/>
            <person name="Semple C.A."/>
            <person name="Seno S."/>
            <person name="Sessa L."/>
            <person name="Sheng Y."/>
            <person name="Shibata Y."/>
            <person name="Shimada H."/>
            <person name="Shimada K."/>
            <person name="Silva D."/>
            <person name="Sinclair B."/>
            <person name="Sperling S."/>
            <person name="Stupka E."/>
            <person name="Sugiura K."/>
            <person name="Sultana R."/>
            <person name="Takenaka Y."/>
            <person name="Taki K."/>
            <person name="Tammoja K."/>
            <person name="Tan S.L."/>
            <person name="Tang S."/>
            <person name="Taylor M.S."/>
            <person name="Tegner J."/>
            <person name="Teichmann S.A."/>
            <person name="Ueda H.R."/>
            <person name="van Nimwegen E."/>
            <person name="Verardo R."/>
            <person name="Wei C.L."/>
            <person name="Yagi K."/>
            <person name="Yamanishi H."/>
            <person name="Zabarovsky E."/>
            <person name="Zhu S."/>
            <person name="Zimmer A."/>
            <person name="Hide W."/>
            <person name="Bult C."/>
            <person name="Grimmond S.M."/>
            <person name="Teasdale R.D."/>
            <person name="Liu E.T."/>
            <person name="Brusic V."/>
            <person name="Quackenbush J."/>
            <person name="Wahlestedt C."/>
            <person name="Mattick J.S."/>
            <person name="Hume D.A."/>
            <person name="Kai C."/>
            <person name="Sasaki D."/>
            <person name="Tomaru Y."/>
            <person name="Fukuda S."/>
            <person name="Kanamori-Katayama M."/>
            <person name="Suzuki M."/>
            <person name="Aoki J."/>
            <person name="Arakawa T."/>
            <person name="Iida J."/>
            <person name="Imamura K."/>
            <person name="Itoh M."/>
            <person name="Kato T."/>
            <person name="Kawaji H."/>
            <person name="Kawagashira N."/>
            <person name="Kawashima T."/>
            <person name="Kojima M."/>
            <person name="Kondo S."/>
            <person name="Konno H."/>
            <person name="Nakano K."/>
            <person name="Ninomiya N."/>
            <person name="Nishio T."/>
            <person name="Okada M."/>
            <person name="Plessy C."/>
            <person name="Shibata K."/>
            <person name="Shiraki T."/>
            <person name="Suzuki S."/>
            <person name="Tagami M."/>
            <person name="Waki K."/>
            <person name="Watahiki A."/>
            <person name="Okamura-Oho Y."/>
            <person name="Suzuki H."/>
            <person name="Kawai J."/>
            <person name="Hayashizaki Y."/>
        </authorList>
    </citation>
    <scope>NUCLEOTIDE SEQUENCE [LARGE SCALE MRNA] (ISOFORMS 1 AND 2)</scope>
    <source>
        <strain>C57BL/6J</strain>
        <tissue>Testis</tissue>
    </source>
</reference>